<accession>Q8CRG6</accession>
<feature type="chain" id="PRO_0000130203" description="Small ribosomal subunit protein uS3">
    <location>
        <begin position="1"/>
        <end position="217"/>
    </location>
</feature>
<feature type="domain" description="KH type-2" evidence="1">
    <location>
        <begin position="38"/>
        <end position="106"/>
    </location>
</feature>
<organism>
    <name type="scientific">Staphylococcus epidermidis (strain ATCC 12228 / FDA PCI 1200)</name>
    <dbReference type="NCBI Taxonomy" id="176280"/>
    <lineage>
        <taxon>Bacteria</taxon>
        <taxon>Bacillati</taxon>
        <taxon>Bacillota</taxon>
        <taxon>Bacilli</taxon>
        <taxon>Bacillales</taxon>
        <taxon>Staphylococcaceae</taxon>
        <taxon>Staphylococcus</taxon>
    </lineage>
</organism>
<name>RS3_STAES</name>
<proteinExistence type="inferred from homology"/>
<sequence length="217" mass="24189">MGQKINPIGLRVGVIRDWEAKWYAEKDFASLLHEDLKIRKFIDNELKEASVSHVDIERAANRINIAIHTGKPGMVIGKGGSEIEKLRNKLNTLTDKKVHINVIEIKKIDIDARLVAENIARQLENRASFRRVQKQAITRAMKNGAKGIKTQVSGRLGGADIARAEQYSEGTVPLHTLRADIDYAHAEADTTYGKLGVKVWIYRGEVLPTKNTSEGGK</sequence>
<gene>
    <name evidence="1" type="primary">rpsC</name>
    <name type="ordered locus">SE_1818</name>
</gene>
<reference key="1">
    <citation type="journal article" date="2003" name="Mol. Microbiol.">
        <title>Genome-based analysis of virulence genes in a non-biofilm-forming Staphylococcus epidermidis strain (ATCC 12228).</title>
        <authorList>
            <person name="Zhang Y.-Q."/>
            <person name="Ren S.-X."/>
            <person name="Li H.-L."/>
            <person name="Wang Y.-X."/>
            <person name="Fu G."/>
            <person name="Yang J."/>
            <person name="Qin Z.-Q."/>
            <person name="Miao Y.-G."/>
            <person name="Wang W.-Y."/>
            <person name="Chen R.-S."/>
            <person name="Shen Y."/>
            <person name="Chen Z."/>
            <person name="Yuan Z.-H."/>
            <person name="Zhao G.-P."/>
            <person name="Qu D."/>
            <person name="Danchin A."/>
            <person name="Wen Y.-M."/>
        </authorList>
    </citation>
    <scope>NUCLEOTIDE SEQUENCE [LARGE SCALE GENOMIC DNA]</scope>
    <source>
        <strain>ATCC 12228 / FDA PCI 1200</strain>
    </source>
</reference>
<dbReference type="EMBL" id="AE015929">
    <property type="protein sequence ID" value="AAO05459.1"/>
    <property type="molecule type" value="Genomic_DNA"/>
</dbReference>
<dbReference type="RefSeq" id="NP_765373.1">
    <property type="nucleotide sequence ID" value="NC_004461.1"/>
</dbReference>
<dbReference type="RefSeq" id="WP_001829791.1">
    <property type="nucleotide sequence ID" value="NZ_WBME01000007.1"/>
</dbReference>
<dbReference type="SMR" id="Q8CRG6"/>
<dbReference type="GeneID" id="50018079"/>
<dbReference type="KEGG" id="sep:SE_1818"/>
<dbReference type="PATRIC" id="fig|176280.10.peg.1774"/>
<dbReference type="eggNOG" id="COG0092">
    <property type="taxonomic scope" value="Bacteria"/>
</dbReference>
<dbReference type="HOGENOM" id="CLU_058591_0_2_9"/>
<dbReference type="OrthoDB" id="9806396at2"/>
<dbReference type="Proteomes" id="UP000001411">
    <property type="component" value="Chromosome"/>
</dbReference>
<dbReference type="GO" id="GO:0022627">
    <property type="term" value="C:cytosolic small ribosomal subunit"/>
    <property type="evidence" value="ECO:0007669"/>
    <property type="project" value="TreeGrafter"/>
</dbReference>
<dbReference type="GO" id="GO:0003729">
    <property type="term" value="F:mRNA binding"/>
    <property type="evidence" value="ECO:0007669"/>
    <property type="project" value="UniProtKB-UniRule"/>
</dbReference>
<dbReference type="GO" id="GO:0019843">
    <property type="term" value="F:rRNA binding"/>
    <property type="evidence" value="ECO:0007669"/>
    <property type="project" value="UniProtKB-UniRule"/>
</dbReference>
<dbReference type="GO" id="GO:0003735">
    <property type="term" value="F:structural constituent of ribosome"/>
    <property type="evidence" value="ECO:0007669"/>
    <property type="project" value="InterPro"/>
</dbReference>
<dbReference type="GO" id="GO:0006412">
    <property type="term" value="P:translation"/>
    <property type="evidence" value="ECO:0007669"/>
    <property type="project" value="UniProtKB-UniRule"/>
</dbReference>
<dbReference type="CDD" id="cd02412">
    <property type="entry name" value="KH-II_30S_S3"/>
    <property type="match status" value="1"/>
</dbReference>
<dbReference type="FunFam" id="3.30.300.20:FF:000001">
    <property type="entry name" value="30S ribosomal protein S3"/>
    <property type="match status" value="1"/>
</dbReference>
<dbReference type="Gene3D" id="3.30.300.20">
    <property type="match status" value="1"/>
</dbReference>
<dbReference type="Gene3D" id="3.30.1140.32">
    <property type="entry name" value="Ribosomal protein S3, C-terminal domain"/>
    <property type="match status" value="1"/>
</dbReference>
<dbReference type="HAMAP" id="MF_01309_B">
    <property type="entry name" value="Ribosomal_uS3_B"/>
    <property type="match status" value="1"/>
</dbReference>
<dbReference type="InterPro" id="IPR004087">
    <property type="entry name" value="KH_dom"/>
</dbReference>
<dbReference type="InterPro" id="IPR015946">
    <property type="entry name" value="KH_dom-like_a/b"/>
</dbReference>
<dbReference type="InterPro" id="IPR004044">
    <property type="entry name" value="KH_dom_type_2"/>
</dbReference>
<dbReference type="InterPro" id="IPR009019">
    <property type="entry name" value="KH_sf_prok-type"/>
</dbReference>
<dbReference type="InterPro" id="IPR036419">
    <property type="entry name" value="Ribosomal_S3_C_sf"/>
</dbReference>
<dbReference type="InterPro" id="IPR005704">
    <property type="entry name" value="Ribosomal_uS3_bac-typ"/>
</dbReference>
<dbReference type="InterPro" id="IPR001351">
    <property type="entry name" value="Ribosomal_uS3_C"/>
</dbReference>
<dbReference type="InterPro" id="IPR018280">
    <property type="entry name" value="Ribosomal_uS3_CS"/>
</dbReference>
<dbReference type="NCBIfam" id="TIGR01009">
    <property type="entry name" value="rpsC_bact"/>
    <property type="match status" value="1"/>
</dbReference>
<dbReference type="PANTHER" id="PTHR11760">
    <property type="entry name" value="30S/40S RIBOSOMAL PROTEIN S3"/>
    <property type="match status" value="1"/>
</dbReference>
<dbReference type="PANTHER" id="PTHR11760:SF19">
    <property type="entry name" value="SMALL RIBOSOMAL SUBUNIT PROTEIN US3C"/>
    <property type="match status" value="1"/>
</dbReference>
<dbReference type="Pfam" id="PF07650">
    <property type="entry name" value="KH_2"/>
    <property type="match status" value="1"/>
</dbReference>
<dbReference type="Pfam" id="PF00189">
    <property type="entry name" value="Ribosomal_S3_C"/>
    <property type="match status" value="1"/>
</dbReference>
<dbReference type="SMART" id="SM00322">
    <property type="entry name" value="KH"/>
    <property type="match status" value="1"/>
</dbReference>
<dbReference type="SUPFAM" id="SSF54814">
    <property type="entry name" value="Prokaryotic type KH domain (KH-domain type II)"/>
    <property type="match status" value="1"/>
</dbReference>
<dbReference type="SUPFAM" id="SSF54821">
    <property type="entry name" value="Ribosomal protein S3 C-terminal domain"/>
    <property type="match status" value="1"/>
</dbReference>
<dbReference type="PROSITE" id="PS50823">
    <property type="entry name" value="KH_TYPE_2"/>
    <property type="match status" value="1"/>
</dbReference>
<dbReference type="PROSITE" id="PS00548">
    <property type="entry name" value="RIBOSOMAL_S3"/>
    <property type="match status" value="1"/>
</dbReference>
<keyword id="KW-0687">Ribonucleoprotein</keyword>
<keyword id="KW-0689">Ribosomal protein</keyword>
<keyword id="KW-0694">RNA-binding</keyword>
<keyword id="KW-0699">rRNA-binding</keyword>
<comment type="function">
    <text evidence="1">Binds the lower part of the 30S subunit head. Binds mRNA in the 70S ribosome, positioning it for translation.</text>
</comment>
<comment type="subunit">
    <text evidence="1">Part of the 30S ribosomal subunit. Forms a tight complex with proteins S10 and S14.</text>
</comment>
<comment type="similarity">
    <text evidence="1">Belongs to the universal ribosomal protein uS3 family.</text>
</comment>
<protein>
    <recommendedName>
        <fullName evidence="1">Small ribosomal subunit protein uS3</fullName>
    </recommendedName>
    <alternativeName>
        <fullName evidence="2">30S ribosomal protein S3</fullName>
    </alternativeName>
</protein>
<evidence type="ECO:0000255" key="1">
    <source>
        <dbReference type="HAMAP-Rule" id="MF_01309"/>
    </source>
</evidence>
<evidence type="ECO:0000305" key="2"/>